<name>ADNP2_HUMAN</name>
<organism>
    <name type="scientific">Homo sapiens</name>
    <name type="common">Human</name>
    <dbReference type="NCBI Taxonomy" id="9606"/>
    <lineage>
        <taxon>Eukaryota</taxon>
        <taxon>Metazoa</taxon>
        <taxon>Chordata</taxon>
        <taxon>Craniata</taxon>
        <taxon>Vertebrata</taxon>
        <taxon>Euteleostomi</taxon>
        <taxon>Mammalia</taxon>
        <taxon>Eutheria</taxon>
        <taxon>Euarchontoglires</taxon>
        <taxon>Primates</taxon>
        <taxon>Haplorrhini</taxon>
        <taxon>Catarrhini</taxon>
        <taxon>Hominidae</taxon>
        <taxon>Homo</taxon>
    </lineage>
</organism>
<keyword id="KW-0238">DNA-binding</keyword>
<keyword id="KW-0371">Homeobox</keyword>
<keyword id="KW-1017">Isopeptide bond</keyword>
<keyword id="KW-0479">Metal-binding</keyword>
<keyword id="KW-0539">Nucleus</keyword>
<keyword id="KW-0597">Phosphoprotein</keyword>
<keyword id="KW-1267">Proteomics identification</keyword>
<keyword id="KW-1185">Reference proteome</keyword>
<keyword id="KW-0677">Repeat</keyword>
<keyword id="KW-0804">Transcription</keyword>
<keyword id="KW-0805">Transcription regulation</keyword>
<keyword id="KW-0832">Ubl conjugation</keyword>
<keyword id="KW-0862">Zinc</keyword>
<keyword id="KW-0863">Zinc-finger</keyword>
<feature type="chain" id="PRO_0000280416" description="Activity-dependent neuroprotector homeobox protein 2">
    <location>
        <begin position="1"/>
        <end position="1131"/>
    </location>
</feature>
<feature type="zinc finger region" description="C2H2-type 1" evidence="2">
    <location>
        <begin position="73"/>
        <end position="96"/>
    </location>
</feature>
<feature type="zinc finger region" description="C2H2-type 2; degenerate" evidence="2">
    <location>
        <begin position="106"/>
        <end position="128"/>
    </location>
</feature>
<feature type="zinc finger region" description="C2H2-type 3; degenerate" evidence="2">
    <location>
        <begin position="155"/>
        <end position="178"/>
    </location>
</feature>
<feature type="zinc finger region" description="C2H2-type 4" evidence="2">
    <location>
        <begin position="215"/>
        <end position="240"/>
    </location>
</feature>
<feature type="zinc finger region" description="C2H2-type 5; degenerate" evidence="2">
    <location>
        <begin position="694"/>
        <end position="716"/>
    </location>
</feature>
<feature type="zinc finger region" description="C2H2-type 6; degenerate" evidence="2">
    <location>
        <begin position="747"/>
        <end position="768"/>
    </location>
</feature>
<feature type="zinc finger region" description="C2H2-type 7" evidence="2">
    <location>
        <begin position="770"/>
        <end position="793"/>
    </location>
</feature>
<feature type="zinc finger region" description="C2H2-type 8" evidence="2">
    <location>
        <begin position="875"/>
        <end position="898"/>
    </location>
</feature>
<feature type="zinc finger region" description="C2H2-type 9; degenerate" evidence="2">
    <location>
        <begin position="913"/>
        <end position="937"/>
    </location>
</feature>
<feature type="DNA-binding region" description="Homeobox" evidence="3">
    <location>
        <begin position="1043"/>
        <end position="1102"/>
    </location>
</feature>
<feature type="region of interest" description="Disordered" evidence="4">
    <location>
        <begin position="274"/>
        <end position="329"/>
    </location>
</feature>
<feature type="compositionally biased region" description="Low complexity" evidence="4">
    <location>
        <begin position="274"/>
        <end position="285"/>
    </location>
</feature>
<feature type="modified residue" description="Phosphoserine" evidence="6">
    <location>
        <position position="1024"/>
    </location>
</feature>
<feature type="cross-link" description="Glycyl lysine isopeptide (Lys-Gly) (interchain with G-Cter in SUMO2)" evidence="8">
    <location>
        <position position="118"/>
    </location>
</feature>
<feature type="cross-link" description="Glycyl lysine isopeptide (Lys-Gly) (interchain with G-Cter in SUMO2)" evidence="8">
    <location>
        <position position="146"/>
    </location>
</feature>
<feature type="cross-link" description="Glycyl lysine isopeptide (Lys-Gly) (interchain with G-Cter in SUMO2)" evidence="8">
    <location>
        <position position="979"/>
    </location>
</feature>
<feature type="cross-link" description="Glycyl lysine isopeptide (Lys-Gly) (interchain with G-Cter in SUMO2)" evidence="8">
    <location>
        <position position="1018"/>
    </location>
</feature>
<feature type="cross-link" description="Glycyl lysine isopeptide (Lys-Gly) (interchain with G-Cter in SUMO1); alternate" evidence="7">
    <location>
        <position position="1032"/>
    </location>
</feature>
<feature type="cross-link" description="Glycyl lysine isopeptide (Lys-Gly) (interchain with G-Cter in SUMO2); alternate" evidence="8">
    <location>
        <position position="1032"/>
    </location>
</feature>
<feature type="sequence conflict" description="In Ref. 3; BAB14180." evidence="5" ref="3">
    <original>S</original>
    <variation>P</variation>
    <location>
        <position position="757"/>
    </location>
</feature>
<gene>
    <name type="primary">ADNP2</name>
    <name type="synonym">KIAA0863</name>
    <name type="synonym">ZNF508</name>
</gene>
<accession>Q6IQ32</accession>
<accession>A8K951</accession>
<accession>O94943</accession>
<accession>Q9H9P3</accession>
<proteinExistence type="evidence at protein level"/>
<evidence type="ECO:0000250" key="1">
    <source>
        <dbReference type="UniProtKB" id="Q8CHC8"/>
    </source>
</evidence>
<evidence type="ECO:0000255" key="2">
    <source>
        <dbReference type="PROSITE-ProRule" id="PRU00042"/>
    </source>
</evidence>
<evidence type="ECO:0000255" key="3">
    <source>
        <dbReference type="PROSITE-ProRule" id="PRU00108"/>
    </source>
</evidence>
<evidence type="ECO:0000256" key="4">
    <source>
        <dbReference type="SAM" id="MobiDB-lite"/>
    </source>
</evidence>
<evidence type="ECO:0000305" key="5"/>
<evidence type="ECO:0007744" key="6">
    <source>
    </source>
</evidence>
<evidence type="ECO:0007744" key="7">
    <source>
    </source>
</evidence>
<evidence type="ECO:0007744" key="8">
    <source>
    </source>
</evidence>
<comment type="function">
    <text evidence="1">May be involved in transcriptional regulation. May play a role in neuronal function; perhaps involved in protection of brain tissues from oxidative stress. May be involved in erythroid differentiation (By similarity).</text>
</comment>
<comment type="subunit">
    <text evidence="1">May interact with SMARCA4/BRG1.</text>
</comment>
<comment type="interaction">
    <interactant intactId="EBI-2838654">
        <id>Q6IQ32</id>
    </interactant>
    <interactant intactId="EBI-78129">
        <id>P83916</id>
        <label>CBX1</label>
    </interactant>
    <organismsDiffer>false</organismsDiffer>
    <experiments>6</experiments>
</comment>
<comment type="interaction">
    <interactant intactId="EBI-2838654">
        <id>Q6IQ32</id>
    </interactant>
    <interactant intactId="EBI-78176">
        <id>Q13185</id>
        <label>CBX3</label>
    </interactant>
    <organismsDiffer>false</organismsDiffer>
    <experiments>6</experiments>
</comment>
<comment type="subcellular location">
    <subcellularLocation>
        <location evidence="5">Nucleus</location>
    </subcellularLocation>
</comment>
<comment type="similarity">
    <text evidence="5">Belongs to the krueppel C2H2-type zinc-finger protein family.</text>
</comment>
<comment type="sequence caution" evidence="5">
    <conflict type="erroneous initiation">
        <sequence resource="EMBL-CDS" id="BAA74886"/>
    </conflict>
    <text>Truncated N-terminus.</text>
</comment>
<comment type="sequence caution" evidence="5">
    <conflict type="frameshift">
        <sequence resource="EMBL-CDS" id="BAB14180"/>
    </conflict>
</comment>
<sequence>MFQIPVENLDNIRKVRKKVKGILVDIGLDSCKELLKDLKGFDPGEKYFHNTSWGDVSLWEPSGKKVRYRTKPYCCGLCKYSTKVLTSFKNHLHRYHEDEIDQELVIPCPNCVFASQPKVVGRHFRMFHAPVRKVQNYTVNILGETKSSRSDVISFTCLKCNFSNTLYYSMKKHVLVAHFHYLINSYFGLRTEEMGEQPKTNDTVSIEKIPPPDKYYCKKCNANASSQDALMYHILTSDIHRDLENKLRSVISEHIKRTGLLKQTHIAPKPAAHLAAPANGSAPSAPAQPPCFHLALPQNSPSPAAGQPVTVAQGAPGSLTHSPPAAGQSHMTLVSSPLPVGQNSLTLQPPAPQPVFLSHGVPLHQSVNPPVLPLSQPVGPVNKSVGTSVLPINQTVRPGVLPLTQPVGPINRPVGPGVLPVSPSVTPGVLQAVSPGVLSVSRAVPSGVLPAGQMTPAGQMTPAGVIPGQTATSGVLPTGQMVQSGVLPVGQTAPSRVLPPGQTAPLRVISAGQVVPSGLLSPNQTVSSSAVVPVNQGVNSGVLQLSQPVVSGVLPVGQPVRPGVLQLNQTVGTNILPVNQPVRPGASQNTTFLTSGSILRQLIPTGKQVNGIPTYTLAPVSVTLPVPPGGLATVAPPQMPIQLLPSGAAAPMAGSMPGMPSPPVLVNAAQSVFVQASSSAADTNQVLKQAKQWKTCPVCNELFPSNVYQVHMEVAHKHSESKSGEKLEPEKLAACAPFLKWMREKTVRCLSCKCLVSEEELIHHLLMHGLGCLFCPCTFHDIKGLSEHSRNRHLGKKKLPMDYSNRGFQLDVDANGNLLFPHLDFITILPKEKLGEREVYLAILAGIHSKSLVPVYVKVRPQAEGTPGSTGKRVSTCPFCFGPFVTTEAYELHLKERHHIMPTVHTVLKSPAFKCIHCCGVYTGNMTLAAIAVHLVRCRSAPKDSSSDLQAQPGFIHNSELLLVSGEVMHDSSFSVKRKLPDGHLGAEDQRHGEEQPPILNADAAPGPEKVTSVVPFKRQRNESRTEGPIVKDEALQILALDPKKYEGRSYEEKKQFLKDYFHKKPYPSKKEIELLSSLFWVWKIDVASFFGKRRYICMKAIKNHKPSVLLGFDMSELKNVKHRLNFEYEP</sequence>
<protein>
    <recommendedName>
        <fullName>Activity-dependent neuroprotector homeobox protein 2</fullName>
        <shortName>ADNP homeobox protein 2</shortName>
    </recommendedName>
    <alternativeName>
        <fullName>Zinc finger protein 508</fullName>
    </alternativeName>
</protein>
<dbReference type="EMBL" id="AB020670">
    <property type="protein sequence ID" value="BAA74886.2"/>
    <property type="status" value="ALT_INIT"/>
    <property type="molecule type" value="mRNA"/>
</dbReference>
<dbReference type="EMBL" id="AK022688">
    <property type="protein sequence ID" value="BAB14180.1"/>
    <property type="status" value="ALT_FRAME"/>
    <property type="molecule type" value="mRNA"/>
</dbReference>
<dbReference type="EMBL" id="AK292566">
    <property type="protein sequence ID" value="BAF85255.1"/>
    <property type="molecule type" value="mRNA"/>
</dbReference>
<dbReference type="EMBL" id="CH471117">
    <property type="protein sequence ID" value="EAW66646.1"/>
    <property type="molecule type" value="Genomic_DNA"/>
</dbReference>
<dbReference type="EMBL" id="BC071589">
    <property type="protein sequence ID" value="AAH71589.1"/>
    <property type="molecule type" value="mRNA"/>
</dbReference>
<dbReference type="CCDS" id="CCDS32853.1"/>
<dbReference type="RefSeq" id="NP_055728.1">
    <property type="nucleotide sequence ID" value="NM_014913.4"/>
</dbReference>
<dbReference type="RefSeq" id="XP_005266713.1">
    <property type="nucleotide sequence ID" value="XM_005266656.4"/>
</dbReference>
<dbReference type="BioGRID" id="116522">
    <property type="interactions" value="58"/>
</dbReference>
<dbReference type="FunCoup" id="Q6IQ32">
    <property type="interactions" value="1033"/>
</dbReference>
<dbReference type="IntAct" id="Q6IQ32">
    <property type="interactions" value="29"/>
</dbReference>
<dbReference type="MINT" id="Q6IQ32"/>
<dbReference type="STRING" id="9606.ENSP00000262198"/>
<dbReference type="GlyGen" id="Q6IQ32">
    <property type="glycosylation" value="2 sites, 1 O-linked glycan (1 site)"/>
</dbReference>
<dbReference type="iPTMnet" id="Q6IQ32"/>
<dbReference type="PhosphoSitePlus" id="Q6IQ32"/>
<dbReference type="BioMuta" id="ADNP2"/>
<dbReference type="DMDM" id="74757998"/>
<dbReference type="jPOST" id="Q6IQ32"/>
<dbReference type="MassIVE" id="Q6IQ32"/>
<dbReference type="PaxDb" id="9606-ENSP00000262198"/>
<dbReference type="PeptideAtlas" id="Q6IQ32"/>
<dbReference type="ProteomicsDB" id="66483"/>
<dbReference type="Pumba" id="Q6IQ32"/>
<dbReference type="Antibodypedia" id="1760">
    <property type="antibodies" value="63 antibodies from 16 providers"/>
</dbReference>
<dbReference type="DNASU" id="22850"/>
<dbReference type="Ensembl" id="ENST00000262198.9">
    <property type="protein sequence ID" value="ENSP00000262198.3"/>
    <property type="gene ID" value="ENSG00000101544.9"/>
</dbReference>
<dbReference type="GeneID" id="22850"/>
<dbReference type="KEGG" id="hsa:22850"/>
<dbReference type="MANE-Select" id="ENST00000262198.9">
    <property type="protein sequence ID" value="ENSP00000262198.3"/>
    <property type="RefSeq nucleotide sequence ID" value="NM_014913.4"/>
    <property type="RefSeq protein sequence ID" value="NP_055728.1"/>
</dbReference>
<dbReference type="UCSC" id="uc032hie.2">
    <property type="organism name" value="human"/>
</dbReference>
<dbReference type="AGR" id="HGNC:23803"/>
<dbReference type="CTD" id="22850"/>
<dbReference type="DisGeNET" id="22850"/>
<dbReference type="GeneCards" id="ADNP2"/>
<dbReference type="HGNC" id="HGNC:23803">
    <property type="gene designation" value="ADNP2"/>
</dbReference>
<dbReference type="HPA" id="ENSG00000101544">
    <property type="expression patterns" value="Tissue enhanced (bone)"/>
</dbReference>
<dbReference type="MIM" id="617422">
    <property type="type" value="gene"/>
</dbReference>
<dbReference type="neXtProt" id="NX_Q6IQ32"/>
<dbReference type="OpenTargets" id="ENSG00000101544"/>
<dbReference type="PharmGKB" id="PA162375700"/>
<dbReference type="VEuPathDB" id="HostDB:ENSG00000101544"/>
<dbReference type="eggNOG" id="ENOG502QU0M">
    <property type="taxonomic scope" value="Eukaryota"/>
</dbReference>
<dbReference type="GeneTree" id="ENSGT00530000063631"/>
<dbReference type="HOGENOM" id="CLU_009119_1_0_1"/>
<dbReference type="InParanoid" id="Q6IQ32"/>
<dbReference type="OMA" id="MEVAHKQ"/>
<dbReference type="OrthoDB" id="10053955at2759"/>
<dbReference type="PAN-GO" id="Q6IQ32">
    <property type="GO annotations" value="2 GO annotations based on evolutionary models"/>
</dbReference>
<dbReference type="PhylomeDB" id="Q6IQ32"/>
<dbReference type="TreeFam" id="TF328818"/>
<dbReference type="PathwayCommons" id="Q6IQ32"/>
<dbReference type="SignaLink" id="Q6IQ32"/>
<dbReference type="BioGRID-ORCS" id="22850">
    <property type="hits" value="14 hits in 1156 CRISPR screens"/>
</dbReference>
<dbReference type="ChiTaRS" id="ADNP2">
    <property type="organism name" value="human"/>
</dbReference>
<dbReference type="GenomeRNAi" id="22850"/>
<dbReference type="Pharos" id="Q6IQ32">
    <property type="development level" value="Tdark"/>
</dbReference>
<dbReference type="PRO" id="PR:Q6IQ32"/>
<dbReference type="Proteomes" id="UP000005640">
    <property type="component" value="Chromosome 18"/>
</dbReference>
<dbReference type="RNAct" id="Q6IQ32">
    <property type="molecule type" value="protein"/>
</dbReference>
<dbReference type="Bgee" id="ENSG00000101544">
    <property type="expression patterns" value="Expressed in secondary oocyte and 209 other cell types or tissues"/>
</dbReference>
<dbReference type="ExpressionAtlas" id="Q6IQ32">
    <property type="expression patterns" value="baseline and differential"/>
</dbReference>
<dbReference type="GO" id="GO:0000785">
    <property type="term" value="C:chromatin"/>
    <property type="evidence" value="ECO:0000247"/>
    <property type="project" value="NTNU_SB"/>
</dbReference>
<dbReference type="GO" id="GO:0005634">
    <property type="term" value="C:nucleus"/>
    <property type="evidence" value="ECO:0000318"/>
    <property type="project" value="GO_Central"/>
</dbReference>
<dbReference type="GO" id="GO:0003677">
    <property type="term" value="F:DNA binding"/>
    <property type="evidence" value="ECO:0007669"/>
    <property type="project" value="UniProtKB-KW"/>
</dbReference>
<dbReference type="GO" id="GO:0000981">
    <property type="term" value="F:DNA-binding transcription factor activity, RNA polymerase II-specific"/>
    <property type="evidence" value="ECO:0000247"/>
    <property type="project" value="NTNU_SB"/>
</dbReference>
<dbReference type="GO" id="GO:0008270">
    <property type="term" value="F:zinc ion binding"/>
    <property type="evidence" value="ECO:0007669"/>
    <property type="project" value="UniProtKB-KW"/>
</dbReference>
<dbReference type="GO" id="GO:0007399">
    <property type="term" value="P:nervous system development"/>
    <property type="evidence" value="ECO:0000250"/>
    <property type="project" value="UniProtKB"/>
</dbReference>
<dbReference type="GO" id="GO:0010468">
    <property type="term" value="P:regulation of gene expression"/>
    <property type="evidence" value="ECO:0000318"/>
    <property type="project" value="GO_Central"/>
</dbReference>
<dbReference type="CDD" id="cd00086">
    <property type="entry name" value="homeodomain"/>
    <property type="match status" value="1"/>
</dbReference>
<dbReference type="InterPro" id="IPR038861">
    <property type="entry name" value="ADNP/ADNP2"/>
</dbReference>
<dbReference type="InterPro" id="IPR045762">
    <property type="entry name" value="ADNP_Znf"/>
</dbReference>
<dbReference type="InterPro" id="IPR001356">
    <property type="entry name" value="HD"/>
</dbReference>
<dbReference type="InterPro" id="IPR009057">
    <property type="entry name" value="Homeodomain-like_sf"/>
</dbReference>
<dbReference type="InterPro" id="IPR013087">
    <property type="entry name" value="Znf_C2H2_type"/>
</dbReference>
<dbReference type="PANTHER" id="PTHR15740:SF2">
    <property type="entry name" value="ACTIVITY-DEPENDENT NEUROPROTECTOR HOMEOBOX PROTEIN 2"/>
    <property type="match status" value="1"/>
</dbReference>
<dbReference type="PANTHER" id="PTHR15740">
    <property type="entry name" value="NEUROPROTECTIVE PEPTIDE-CONTAINING PROTEIN"/>
    <property type="match status" value="1"/>
</dbReference>
<dbReference type="Pfam" id="PF19627">
    <property type="entry name" value="ADNP_N"/>
    <property type="match status" value="2"/>
</dbReference>
<dbReference type="SMART" id="SM00389">
    <property type="entry name" value="HOX"/>
    <property type="match status" value="1"/>
</dbReference>
<dbReference type="SMART" id="SM00355">
    <property type="entry name" value="ZnF_C2H2"/>
    <property type="match status" value="8"/>
</dbReference>
<dbReference type="SUPFAM" id="SSF46689">
    <property type="entry name" value="Homeodomain-like"/>
    <property type="match status" value="1"/>
</dbReference>
<dbReference type="PROSITE" id="PS00028">
    <property type="entry name" value="ZINC_FINGER_C2H2_1"/>
    <property type="match status" value="2"/>
</dbReference>
<dbReference type="PROSITE" id="PS50157">
    <property type="entry name" value="ZINC_FINGER_C2H2_2"/>
    <property type="match status" value="1"/>
</dbReference>
<reference key="1">
    <citation type="journal article" date="1998" name="DNA Res.">
        <title>Prediction of the coding sequences of unidentified human genes. XII. The complete sequences of 100 new cDNA clones from brain which code for large proteins in vitro.</title>
        <authorList>
            <person name="Nagase T."/>
            <person name="Ishikawa K."/>
            <person name="Suyama M."/>
            <person name="Kikuno R."/>
            <person name="Hirosawa M."/>
            <person name="Miyajima N."/>
            <person name="Tanaka A."/>
            <person name="Kotani H."/>
            <person name="Nomura N."/>
            <person name="Ohara O."/>
        </authorList>
    </citation>
    <scope>NUCLEOTIDE SEQUENCE [LARGE SCALE MRNA]</scope>
    <source>
        <tissue>Brain</tissue>
    </source>
</reference>
<reference key="2">
    <citation type="submission" date="2004-01" db="EMBL/GenBank/DDBJ databases">
        <authorList>
            <person name="Ohara O."/>
            <person name="Suyama M."/>
            <person name="Kikuno R."/>
            <person name="Nagase T."/>
            <person name="Ishikawa K."/>
        </authorList>
    </citation>
    <scope>SEQUENCE REVISION</scope>
</reference>
<reference key="3">
    <citation type="journal article" date="2004" name="Nat. Genet.">
        <title>Complete sequencing and characterization of 21,243 full-length human cDNAs.</title>
        <authorList>
            <person name="Ota T."/>
            <person name="Suzuki Y."/>
            <person name="Nishikawa T."/>
            <person name="Otsuki T."/>
            <person name="Sugiyama T."/>
            <person name="Irie R."/>
            <person name="Wakamatsu A."/>
            <person name="Hayashi K."/>
            <person name="Sato H."/>
            <person name="Nagai K."/>
            <person name="Kimura K."/>
            <person name="Makita H."/>
            <person name="Sekine M."/>
            <person name="Obayashi M."/>
            <person name="Nishi T."/>
            <person name="Shibahara T."/>
            <person name="Tanaka T."/>
            <person name="Ishii S."/>
            <person name="Yamamoto J."/>
            <person name="Saito K."/>
            <person name="Kawai Y."/>
            <person name="Isono Y."/>
            <person name="Nakamura Y."/>
            <person name="Nagahari K."/>
            <person name="Murakami K."/>
            <person name="Yasuda T."/>
            <person name="Iwayanagi T."/>
            <person name="Wagatsuma M."/>
            <person name="Shiratori A."/>
            <person name="Sudo H."/>
            <person name="Hosoiri T."/>
            <person name="Kaku Y."/>
            <person name="Kodaira H."/>
            <person name="Kondo H."/>
            <person name="Sugawara M."/>
            <person name="Takahashi M."/>
            <person name="Kanda K."/>
            <person name="Yokoi T."/>
            <person name="Furuya T."/>
            <person name="Kikkawa E."/>
            <person name="Omura Y."/>
            <person name="Abe K."/>
            <person name="Kamihara K."/>
            <person name="Katsuta N."/>
            <person name="Sato K."/>
            <person name="Tanikawa M."/>
            <person name="Yamazaki M."/>
            <person name="Ninomiya K."/>
            <person name="Ishibashi T."/>
            <person name="Yamashita H."/>
            <person name="Murakawa K."/>
            <person name="Fujimori K."/>
            <person name="Tanai H."/>
            <person name="Kimata M."/>
            <person name="Watanabe M."/>
            <person name="Hiraoka S."/>
            <person name="Chiba Y."/>
            <person name="Ishida S."/>
            <person name="Ono Y."/>
            <person name="Takiguchi S."/>
            <person name="Watanabe S."/>
            <person name="Yosida M."/>
            <person name="Hotuta T."/>
            <person name="Kusano J."/>
            <person name="Kanehori K."/>
            <person name="Takahashi-Fujii A."/>
            <person name="Hara H."/>
            <person name="Tanase T.-O."/>
            <person name="Nomura Y."/>
            <person name="Togiya S."/>
            <person name="Komai F."/>
            <person name="Hara R."/>
            <person name="Takeuchi K."/>
            <person name="Arita M."/>
            <person name="Imose N."/>
            <person name="Musashino K."/>
            <person name="Yuuki H."/>
            <person name="Oshima A."/>
            <person name="Sasaki N."/>
            <person name="Aotsuka S."/>
            <person name="Yoshikawa Y."/>
            <person name="Matsunawa H."/>
            <person name="Ichihara T."/>
            <person name="Shiohata N."/>
            <person name="Sano S."/>
            <person name="Moriya S."/>
            <person name="Momiyama H."/>
            <person name="Satoh N."/>
            <person name="Takami S."/>
            <person name="Terashima Y."/>
            <person name="Suzuki O."/>
            <person name="Nakagawa S."/>
            <person name="Senoh A."/>
            <person name="Mizoguchi H."/>
            <person name="Goto Y."/>
            <person name="Shimizu F."/>
            <person name="Wakebe H."/>
            <person name="Hishigaki H."/>
            <person name="Watanabe T."/>
            <person name="Sugiyama A."/>
            <person name="Takemoto M."/>
            <person name="Kawakami B."/>
            <person name="Yamazaki M."/>
            <person name="Watanabe K."/>
            <person name="Kumagai A."/>
            <person name="Itakura S."/>
            <person name="Fukuzumi Y."/>
            <person name="Fujimori Y."/>
            <person name="Komiyama M."/>
            <person name="Tashiro H."/>
            <person name="Tanigami A."/>
            <person name="Fujiwara T."/>
            <person name="Ono T."/>
            <person name="Yamada K."/>
            <person name="Fujii Y."/>
            <person name="Ozaki K."/>
            <person name="Hirao M."/>
            <person name="Ohmori Y."/>
            <person name="Kawabata A."/>
            <person name="Hikiji T."/>
            <person name="Kobatake N."/>
            <person name="Inagaki H."/>
            <person name="Ikema Y."/>
            <person name="Okamoto S."/>
            <person name="Okitani R."/>
            <person name="Kawakami T."/>
            <person name="Noguchi S."/>
            <person name="Itoh T."/>
            <person name="Shigeta K."/>
            <person name="Senba T."/>
            <person name="Matsumura K."/>
            <person name="Nakajima Y."/>
            <person name="Mizuno T."/>
            <person name="Morinaga M."/>
            <person name="Sasaki M."/>
            <person name="Togashi T."/>
            <person name="Oyama M."/>
            <person name="Hata H."/>
            <person name="Watanabe M."/>
            <person name="Komatsu T."/>
            <person name="Mizushima-Sugano J."/>
            <person name="Satoh T."/>
            <person name="Shirai Y."/>
            <person name="Takahashi Y."/>
            <person name="Nakagawa K."/>
            <person name="Okumura K."/>
            <person name="Nagase T."/>
            <person name="Nomura N."/>
            <person name="Kikuchi H."/>
            <person name="Masuho Y."/>
            <person name="Yamashita R."/>
            <person name="Nakai K."/>
            <person name="Yada T."/>
            <person name="Nakamura Y."/>
            <person name="Ohara O."/>
            <person name="Isogai T."/>
            <person name="Sugano S."/>
        </authorList>
    </citation>
    <scope>NUCLEOTIDE SEQUENCE [LARGE SCALE MRNA]</scope>
    <source>
        <tissue>Teratocarcinoma</tissue>
        <tissue>Testis</tissue>
    </source>
</reference>
<reference key="4">
    <citation type="submission" date="2005-07" db="EMBL/GenBank/DDBJ databases">
        <authorList>
            <person name="Mural R.J."/>
            <person name="Istrail S."/>
            <person name="Sutton G.G."/>
            <person name="Florea L."/>
            <person name="Halpern A.L."/>
            <person name="Mobarry C.M."/>
            <person name="Lippert R."/>
            <person name="Walenz B."/>
            <person name="Shatkay H."/>
            <person name="Dew I."/>
            <person name="Miller J.R."/>
            <person name="Flanigan M.J."/>
            <person name="Edwards N.J."/>
            <person name="Bolanos R."/>
            <person name="Fasulo D."/>
            <person name="Halldorsson B.V."/>
            <person name="Hannenhalli S."/>
            <person name="Turner R."/>
            <person name="Yooseph S."/>
            <person name="Lu F."/>
            <person name="Nusskern D.R."/>
            <person name="Shue B.C."/>
            <person name="Zheng X.H."/>
            <person name="Zhong F."/>
            <person name="Delcher A.L."/>
            <person name="Huson D.H."/>
            <person name="Kravitz S.A."/>
            <person name="Mouchard L."/>
            <person name="Reinert K."/>
            <person name="Remington K.A."/>
            <person name="Clark A.G."/>
            <person name="Waterman M.S."/>
            <person name="Eichler E.E."/>
            <person name="Adams M.D."/>
            <person name="Hunkapiller M.W."/>
            <person name="Myers E.W."/>
            <person name="Venter J.C."/>
        </authorList>
    </citation>
    <scope>NUCLEOTIDE SEQUENCE [LARGE SCALE GENOMIC DNA]</scope>
</reference>
<reference key="5">
    <citation type="journal article" date="2004" name="Genome Res.">
        <title>The status, quality, and expansion of the NIH full-length cDNA project: the Mammalian Gene Collection (MGC).</title>
        <authorList>
            <consortium name="The MGC Project Team"/>
        </authorList>
    </citation>
    <scope>NUCLEOTIDE SEQUENCE [LARGE SCALE MRNA]</scope>
    <source>
        <tissue>Placenta</tissue>
    </source>
</reference>
<reference key="6">
    <citation type="journal article" date="2011" name="Sci. Signal.">
        <title>System-wide temporal characterization of the proteome and phosphoproteome of human embryonic stem cell differentiation.</title>
        <authorList>
            <person name="Rigbolt K.T."/>
            <person name="Prokhorova T.A."/>
            <person name="Akimov V."/>
            <person name="Henningsen J."/>
            <person name="Johansen P.T."/>
            <person name="Kratchmarova I."/>
            <person name="Kassem M."/>
            <person name="Mann M."/>
            <person name="Olsen J.V."/>
            <person name="Blagoev B."/>
        </authorList>
    </citation>
    <scope>PHOSPHORYLATION [LARGE SCALE ANALYSIS] AT SER-1024</scope>
    <scope>IDENTIFICATION BY MASS SPECTROMETRY [LARGE SCALE ANALYSIS]</scope>
</reference>
<reference key="7">
    <citation type="journal article" date="2014" name="Proc. Natl. Acad. Sci. U.S.A.">
        <title>Mapping of SUMO sites and analysis of SUMOylation changes induced by external stimuli.</title>
        <authorList>
            <person name="Impens F."/>
            <person name="Radoshevich L."/>
            <person name="Cossart P."/>
            <person name="Ribet D."/>
        </authorList>
    </citation>
    <scope>SUMOYLATION [LARGE SCALE ANALYSIS] AT LYS-1032</scope>
    <scope>IDENTIFICATION BY MASS SPECTROMETRY [LARGE SCALE ANALYSIS]</scope>
</reference>
<reference key="8">
    <citation type="journal article" date="2017" name="Nat. Struct. Mol. Biol.">
        <title>Site-specific mapping of the human SUMO proteome reveals co-modification with phosphorylation.</title>
        <authorList>
            <person name="Hendriks I.A."/>
            <person name="Lyon D."/>
            <person name="Young C."/>
            <person name="Jensen L.J."/>
            <person name="Vertegaal A.C."/>
            <person name="Nielsen M.L."/>
        </authorList>
    </citation>
    <scope>SUMOYLATION [LARGE SCALE ANALYSIS] AT LYS-118; LYS-146; LYS-979; LYS-1018 AND LYS-1032</scope>
    <scope>IDENTIFICATION BY MASS SPECTROMETRY [LARGE SCALE ANALYSIS]</scope>
</reference>